<keyword id="KW-0963">Cytoplasm</keyword>
<keyword id="KW-0520">NAD</keyword>
<keyword id="KW-0560">Oxidoreductase</keyword>
<keyword id="KW-0664">Pyridoxine biosynthesis</keyword>
<name>E4PD_ECOBW</name>
<gene>
    <name evidence="1" type="primary">epd</name>
    <name type="ordered locus">BWG_2650</name>
</gene>
<comment type="function">
    <text evidence="1">Catalyzes the NAD-dependent conversion of D-erythrose 4-phosphate to 4-phosphoerythronate.</text>
</comment>
<comment type="catalytic activity">
    <reaction evidence="1">
        <text>D-erythrose 4-phosphate + NAD(+) + H2O = 4-phospho-D-erythronate + NADH + 2 H(+)</text>
        <dbReference type="Rhea" id="RHEA:12056"/>
        <dbReference type="ChEBI" id="CHEBI:15377"/>
        <dbReference type="ChEBI" id="CHEBI:15378"/>
        <dbReference type="ChEBI" id="CHEBI:16897"/>
        <dbReference type="ChEBI" id="CHEBI:57540"/>
        <dbReference type="ChEBI" id="CHEBI:57945"/>
        <dbReference type="ChEBI" id="CHEBI:58766"/>
        <dbReference type="EC" id="1.2.1.72"/>
    </reaction>
</comment>
<comment type="pathway">
    <text evidence="1">Cofactor biosynthesis; pyridoxine 5'-phosphate biosynthesis; pyridoxine 5'-phosphate from D-erythrose 4-phosphate: step 1/5.</text>
</comment>
<comment type="subunit">
    <text evidence="1">Homotetramer.</text>
</comment>
<comment type="subcellular location">
    <subcellularLocation>
        <location evidence="1">Cytoplasm</location>
    </subcellularLocation>
</comment>
<comment type="similarity">
    <text evidence="1">Belongs to the glyceraldehyde-3-phosphate dehydrogenase family. Epd subfamily.</text>
</comment>
<dbReference type="EC" id="1.2.1.72" evidence="1"/>
<dbReference type="EMBL" id="CP001396">
    <property type="protein sequence ID" value="ACR62749.1"/>
    <property type="molecule type" value="Genomic_DNA"/>
</dbReference>
<dbReference type="RefSeq" id="WP_000218480.1">
    <property type="nucleotide sequence ID" value="NC_012759.1"/>
</dbReference>
<dbReference type="SMR" id="C5A0J7"/>
<dbReference type="GeneID" id="93779071"/>
<dbReference type="KEGG" id="ebw:BWG_2650"/>
<dbReference type="HOGENOM" id="CLU_030140_0_2_6"/>
<dbReference type="UniPathway" id="UPA00244">
    <property type="reaction ID" value="UER00309"/>
</dbReference>
<dbReference type="GO" id="GO:0005737">
    <property type="term" value="C:cytoplasm"/>
    <property type="evidence" value="ECO:0007669"/>
    <property type="project" value="UniProtKB-SubCell"/>
</dbReference>
<dbReference type="GO" id="GO:0048001">
    <property type="term" value="F:erythrose-4-phosphate dehydrogenase activity"/>
    <property type="evidence" value="ECO:0007669"/>
    <property type="project" value="UniProtKB-UniRule"/>
</dbReference>
<dbReference type="GO" id="GO:0051287">
    <property type="term" value="F:NAD binding"/>
    <property type="evidence" value="ECO:0007669"/>
    <property type="project" value="InterPro"/>
</dbReference>
<dbReference type="GO" id="GO:0042823">
    <property type="term" value="P:pyridoxal phosphate biosynthetic process"/>
    <property type="evidence" value="ECO:0007669"/>
    <property type="project" value="UniProtKB-UniRule"/>
</dbReference>
<dbReference type="GO" id="GO:0008615">
    <property type="term" value="P:pyridoxine biosynthetic process"/>
    <property type="evidence" value="ECO:0007669"/>
    <property type="project" value="UniProtKB-UniRule"/>
</dbReference>
<dbReference type="CDD" id="cd23937">
    <property type="entry name" value="GAPDH_C_E4PDH"/>
    <property type="match status" value="1"/>
</dbReference>
<dbReference type="CDD" id="cd17892">
    <property type="entry name" value="GAPDH_N_E4PDH"/>
    <property type="match status" value="1"/>
</dbReference>
<dbReference type="FunFam" id="3.30.360.10:FF:000007">
    <property type="entry name" value="D-erythrose-4-phosphate dehydrogenase"/>
    <property type="match status" value="1"/>
</dbReference>
<dbReference type="FunFam" id="3.40.50.720:FF:000001">
    <property type="entry name" value="Glyceraldehyde-3-phosphate dehydrogenase"/>
    <property type="match status" value="1"/>
</dbReference>
<dbReference type="Gene3D" id="3.30.360.10">
    <property type="entry name" value="Dihydrodipicolinate Reductase, domain 2"/>
    <property type="match status" value="1"/>
</dbReference>
<dbReference type="Gene3D" id="3.40.50.720">
    <property type="entry name" value="NAD(P)-binding Rossmann-like Domain"/>
    <property type="match status" value="1"/>
</dbReference>
<dbReference type="HAMAP" id="MF_01640">
    <property type="entry name" value="E4P_dehydrog"/>
    <property type="match status" value="1"/>
</dbReference>
<dbReference type="InterPro" id="IPR006422">
    <property type="entry name" value="E4P_DH_bac"/>
</dbReference>
<dbReference type="InterPro" id="IPR020831">
    <property type="entry name" value="GlycerAld/Erythrose_P_DH"/>
</dbReference>
<dbReference type="InterPro" id="IPR020830">
    <property type="entry name" value="GlycerAld_3-P_DH_AS"/>
</dbReference>
<dbReference type="InterPro" id="IPR020829">
    <property type="entry name" value="GlycerAld_3-P_DH_cat"/>
</dbReference>
<dbReference type="InterPro" id="IPR020828">
    <property type="entry name" value="GlycerAld_3-P_DH_NAD(P)-bd"/>
</dbReference>
<dbReference type="InterPro" id="IPR036291">
    <property type="entry name" value="NAD(P)-bd_dom_sf"/>
</dbReference>
<dbReference type="NCBIfam" id="TIGR01532">
    <property type="entry name" value="E4PD_g-proteo"/>
    <property type="match status" value="1"/>
</dbReference>
<dbReference type="NCBIfam" id="NF010058">
    <property type="entry name" value="PRK13535.1"/>
    <property type="match status" value="1"/>
</dbReference>
<dbReference type="PANTHER" id="PTHR43148">
    <property type="entry name" value="GLYCERALDEHYDE-3-PHOSPHATE DEHYDROGENASE 2"/>
    <property type="match status" value="1"/>
</dbReference>
<dbReference type="Pfam" id="PF02800">
    <property type="entry name" value="Gp_dh_C"/>
    <property type="match status" value="1"/>
</dbReference>
<dbReference type="Pfam" id="PF00044">
    <property type="entry name" value="Gp_dh_N"/>
    <property type="match status" value="1"/>
</dbReference>
<dbReference type="PIRSF" id="PIRSF000149">
    <property type="entry name" value="GAP_DH"/>
    <property type="match status" value="1"/>
</dbReference>
<dbReference type="PRINTS" id="PR00078">
    <property type="entry name" value="G3PDHDRGNASE"/>
</dbReference>
<dbReference type="SMART" id="SM00846">
    <property type="entry name" value="Gp_dh_N"/>
    <property type="match status" value="1"/>
</dbReference>
<dbReference type="SUPFAM" id="SSF55347">
    <property type="entry name" value="Glyceraldehyde-3-phosphate dehydrogenase-like, C-terminal domain"/>
    <property type="match status" value="1"/>
</dbReference>
<dbReference type="SUPFAM" id="SSF51735">
    <property type="entry name" value="NAD(P)-binding Rossmann-fold domains"/>
    <property type="match status" value="1"/>
</dbReference>
<dbReference type="PROSITE" id="PS00071">
    <property type="entry name" value="GAPDH"/>
    <property type="match status" value="1"/>
</dbReference>
<feature type="chain" id="PRO_1000215823" description="D-erythrose-4-phosphate dehydrogenase">
    <location>
        <begin position="1"/>
        <end position="339"/>
    </location>
</feature>
<feature type="active site" description="Nucleophile" evidence="1">
    <location>
        <position position="155"/>
    </location>
</feature>
<feature type="binding site" evidence="1">
    <location>
        <begin position="12"/>
        <end position="13"/>
    </location>
    <ligand>
        <name>NAD(+)</name>
        <dbReference type="ChEBI" id="CHEBI:57540"/>
    </ligand>
</feature>
<feature type="binding site" evidence="1">
    <location>
        <position position="81"/>
    </location>
    <ligand>
        <name>NAD(+)</name>
        <dbReference type="ChEBI" id="CHEBI:57540"/>
    </ligand>
</feature>
<feature type="binding site" evidence="1">
    <location>
        <begin position="154"/>
        <end position="156"/>
    </location>
    <ligand>
        <name>substrate</name>
    </ligand>
</feature>
<feature type="binding site" evidence="1">
    <location>
        <position position="200"/>
    </location>
    <ligand>
        <name>substrate</name>
    </ligand>
</feature>
<feature type="binding site" evidence="1">
    <location>
        <begin position="213"/>
        <end position="214"/>
    </location>
    <ligand>
        <name>substrate</name>
    </ligand>
</feature>
<feature type="binding site" evidence="1">
    <location>
        <position position="236"/>
    </location>
    <ligand>
        <name>substrate</name>
    </ligand>
</feature>
<feature type="binding site" evidence="1">
    <location>
        <position position="318"/>
    </location>
    <ligand>
        <name>NAD(+)</name>
        <dbReference type="ChEBI" id="CHEBI:57540"/>
    </ligand>
</feature>
<feature type="site" description="Activates thiol group during catalysis" evidence="1">
    <location>
        <position position="182"/>
    </location>
</feature>
<protein>
    <recommendedName>
        <fullName evidence="1">D-erythrose-4-phosphate dehydrogenase</fullName>
        <shortName evidence="1">E4PDH</shortName>
        <ecNumber evidence="1">1.2.1.72</ecNumber>
    </recommendedName>
</protein>
<proteinExistence type="inferred from homology"/>
<sequence length="339" mass="37299">MTVRVAINGFGRIGRNVVRALYESGRRAEITVVAINELADAAGMAHLLKYDTSHGRFAWEVRQERDQLFVGDDAIRVLHERSLQSLPWRELGVDVVLDCTGVYGSREHGEAHIAAGAKKVLFSHPGSNDLDATVVYGVNQDQLRAEHRIVSNASCTTNCIIPVIKLLDDAYGIESGTVTTIHSAMHDQQVIDAYHPDLRRTRAASQSIIPVDTKLAAGITRFFPQFNDRFEAIAVRVPTINVTAIDLSVTVKKPVKANEVNLLLQKAAQGAFHGIVDYTELPLVSVDFNHDPHSAIVDGTQTRVSGAHLIKTLVWCDNEWGFANRMLDTTLAMATVAFR</sequence>
<reference key="1">
    <citation type="journal article" date="2009" name="J. Bacteriol.">
        <title>Genomic sequencing reveals regulatory mutations and recombinational events in the widely used MC4100 lineage of Escherichia coli K-12.</title>
        <authorList>
            <person name="Ferenci T."/>
            <person name="Zhou Z."/>
            <person name="Betteridge T."/>
            <person name="Ren Y."/>
            <person name="Liu Y."/>
            <person name="Feng L."/>
            <person name="Reeves P.R."/>
            <person name="Wang L."/>
        </authorList>
    </citation>
    <scope>NUCLEOTIDE SEQUENCE [LARGE SCALE GENOMIC DNA]</scope>
    <source>
        <strain>K12 / MC4100 / BW2952</strain>
    </source>
</reference>
<evidence type="ECO:0000255" key="1">
    <source>
        <dbReference type="HAMAP-Rule" id="MF_01640"/>
    </source>
</evidence>
<organism>
    <name type="scientific">Escherichia coli (strain K12 / MC4100 / BW2952)</name>
    <dbReference type="NCBI Taxonomy" id="595496"/>
    <lineage>
        <taxon>Bacteria</taxon>
        <taxon>Pseudomonadati</taxon>
        <taxon>Pseudomonadota</taxon>
        <taxon>Gammaproteobacteria</taxon>
        <taxon>Enterobacterales</taxon>
        <taxon>Enterobacteriaceae</taxon>
        <taxon>Escherichia</taxon>
    </lineage>
</organism>
<accession>C5A0J7</accession>